<proteinExistence type="inferred from homology"/>
<protein>
    <recommendedName>
        <fullName evidence="1">RNA polymerase sigma factor RpoS</fullName>
    </recommendedName>
    <alternativeName>
        <fullName evidence="1">Sigma S</fullName>
    </alternativeName>
    <alternativeName>
        <fullName evidence="1">Sigma-38</fullName>
    </alternativeName>
</protein>
<name>RPOS_SALTU</name>
<feature type="chain" id="PRO_0000424540" description="RNA polymerase sigma factor RpoS">
    <location>
        <begin position="1"/>
        <end position="330"/>
    </location>
</feature>
<feature type="DNA-binding region" description="H-T-H motif" evidence="1">
    <location>
        <begin position="288"/>
        <end position="307"/>
    </location>
</feature>
<feature type="region of interest" description="Sigma-70 factor domain-1" evidence="1">
    <location>
        <begin position="56"/>
        <end position="89"/>
    </location>
</feature>
<feature type="region of interest" description="Sigma-70 factor domain-2" evidence="1">
    <location>
        <begin position="94"/>
        <end position="164"/>
    </location>
</feature>
<feature type="region of interest" description="Sigma-70 factor domain-3" evidence="1">
    <location>
        <begin position="174"/>
        <end position="249"/>
    </location>
</feature>
<feature type="region of interest" description="Sigma-70 factor domain-4" evidence="1">
    <location>
        <begin position="262"/>
        <end position="315"/>
    </location>
</feature>
<feature type="short sequence motif" description="Interaction with polymerase core subunit RpoC" evidence="1">
    <location>
        <begin position="118"/>
        <end position="121"/>
    </location>
</feature>
<comment type="function">
    <text evidence="1 2">Sigma factors are initiation factors that promote the attachment of RNA polymerase to specific initiation sites and are then released. This sigma factor is the master transcriptional regulator of the stationary phase and the general stress response, including response to organic acid stress.</text>
</comment>
<comment type="subunit">
    <text evidence="1">Interacts with the RNA polymerase core enzyme.</text>
</comment>
<comment type="subcellular location">
    <subcellularLocation>
        <location evidence="1">Cytoplasm</location>
    </subcellularLocation>
</comment>
<comment type="disruption phenotype">
    <text evidence="2">Very sensitive to pH 3.0 when grown on glucose; tolerance increases 10,000-fold in a pgi disruption.</text>
</comment>
<comment type="similarity">
    <text evidence="1">Belongs to the sigma-70 factor family. RpoS subfamily.</text>
</comment>
<sequence length="330" mass="37933">MSQNTLKVHDLNEDAEFDENGVEAFDEKALSEEEPSDNDLAEEELLSQGATQRVLDATQLYLGEIGYSPLLTAEEEVYFARRALRGDVASRRRMIESNLRLVVKIARRYGNRGLALLDLIEEGNLGLIRAVEKFDPERGFRFSTYATWWIRQTIERAIMNQTRTIRLPIHIVKELNVYLRTARELSHKLDHEPSAEEIAEQLDKPVDDVSRMLRLNERITSVDTPLGGDSEKALLDILADEKENGPEDTTQDDDMKQSIVKWLFELNAKQREVLARRFGLLGYEAATLEDVGREIGLTRERVRQIQVEGLRRLREILQTQGLNIEALFRE</sequence>
<reference key="1">
    <citation type="journal article" date="2011" name="J. Bacteriol.">
        <title>Complete genome sequence of the universal killer Salmonella enterica serovar typhimurium UK-1 (ATCC 68169).</title>
        <authorList>
            <person name="Luo Y."/>
            <person name="Kong Q."/>
            <person name="Yang J."/>
            <person name="Golden G."/>
            <person name="Wanda S.Y."/>
            <person name="Jensen R.V."/>
            <person name="Ernst P.B."/>
            <person name="Curtiss R. III"/>
        </authorList>
    </citation>
    <scope>NUCLEOTIDE SEQUENCE [LARGE SCALE GENOMIC DNA]</scope>
    <source>
        <strain>ATCC 68169 / UK-1</strain>
    </source>
</reference>
<reference key="2">
    <citation type="journal article" date="1998" name="J. Bacteriol.">
        <title>A low pH-inducible, PhoPQ-dependent acid tolerance response protects Salmonella typhimurium against inorganic acid stress.</title>
        <authorList>
            <person name="Bearson B.L."/>
            <person name="Wilson L."/>
            <person name="Foster J.W."/>
        </authorList>
    </citation>
    <scope>FUNCTION</scope>
    <scope>DISRUPTION PHENOTYPE</scope>
    <source>
        <strain>ATCC 68169 / UK-1</strain>
    </source>
</reference>
<organism>
    <name type="scientific">Salmonella typhimurium (strain ATCC 68169 / UK-1)</name>
    <dbReference type="NCBI Taxonomy" id="990282"/>
    <lineage>
        <taxon>Bacteria</taxon>
        <taxon>Pseudomonadati</taxon>
        <taxon>Pseudomonadota</taxon>
        <taxon>Gammaproteobacteria</taxon>
        <taxon>Enterobacterales</taxon>
        <taxon>Enterobacteriaceae</taxon>
        <taxon>Salmonella</taxon>
    </lineage>
</organism>
<evidence type="ECO:0000255" key="1">
    <source>
        <dbReference type="HAMAP-Rule" id="MF_00959"/>
    </source>
</evidence>
<evidence type="ECO:0000269" key="2">
    <source>
    </source>
</evidence>
<dbReference type="EMBL" id="CP002614">
    <property type="protein sequence ID" value="AEF08778.1"/>
    <property type="molecule type" value="Genomic_DNA"/>
</dbReference>
<dbReference type="RefSeq" id="WP_000081498.1">
    <property type="nucleotide sequence ID" value="NC_016863.1"/>
</dbReference>
<dbReference type="SMR" id="F5ZTT9"/>
<dbReference type="GeneID" id="89547518"/>
<dbReference type="KEGG" id="sej:STMUK_2913"/>
<dbReference type="PATRIC" id="fig|990282.4.peg.3039"/>
<dbReference type="HOGENOM" id="CLU_014793_3_5_6"/>
<dbReference type="Proteomes" id="UP000008278">
    <property type="component" value="Chromosome"/>
</dbReference>
<dbReference type="GO" id="GO:0005737">
    <property type="term" value="C:cytoplasm"/>
    <property type="evidence" value="ECO:0007669"/>
    <property type="project" value="UniProtKB-SubCell"/>
</dbReference>
<dbReference type="GO" id="GO:0003677">
    <property type="term" value="F:DNA binding"/>
    <property type="evidence" value="ECO:0007669"/>
    <property type="project" value="UniProtKB-UniRule"/>
</dbReference>
<dbReference type="GO" id="GO:0016987">
    <property type="term" value="F:sigma factor activity"/>
    <property type="evidence" value="ECO:0007669"/>
    <property type="project" value="UniProtKB-UniRule"/>
</dbReference>
<dbReference type="GO" id="GO:0006352">
    <property type="term" value="P:DNA-templated transcription initiation"/>
    <property type="evidence" value="ECO:0007669"/>
    <property type="project" value="UniProtKB-UniRule"/>
</dbReference>
<dbReference type="CDD" id="cd06171">
    <property type="entry name" value="Sigma70_r4"/>
    <property type="match status" value="1"/>
</dbReference>
<dbReference type="FunFam" id="1.10.10.10:FF:000044">
    <property type="entry name" value="RNA polymerase sigma factor RpoS"/>
    <property type="match status" value="1"/>
</dbReference>
<dbReference type="FunFam" id="1.10.10.10:FF:000046">
    <property type="entry name" value="RNA polymerase sigma factor RpoS"/>
    <property type="match status" value="1"/>
</dbReference>
<dbReference type="FunFam" id="1.10.601.10:FF:000001">
    <property type="entry name" value="RNA polymerase sigma factor SigA"/>
    <property type="match status" value="1"/>
</dbReference>
<dbReference type="Gene3D" id="1.10.601.10">
    <property type="entry name" value="RNA Polymerase Primary Sigma Factor"/>
    <property type="match status" value="1"/>
</dbReference>
<dbReference type="Gene3D" id="1.10.10.10">
    <property type="entry name" value="Winged helix-like DNA-binding domain superfamily/Winged helix DNA-binding domain"/>
    <property type="match status" value="2"/>
</dbReference>
<dbReference type="HAMAP" id="MF_00959">
    <property type="entry name" value="Sigma70_RpoS"/>
    <property type="match status" value="1"/>
</dbReference>
<dbReference type="InterPro" id="IPR014284">
    <property type="entry name" value="RNA_pol_sigma-70_dom"/>
</dbReference>
<dbReference type="InterPro" id="IPR000943">
    <property type="entry name" value="RNA_pol_sigma70"/>
</dbReference>
<dbReference type="InterPro" id="IPR009042">
    <property type="entry name" value="RNA_pol_sigma70_r1_2"/>
</dbReference>
<dbReference type="InterPro" id="IPR007627">
    <property type="entry name" value="RNA_pol_sigma70_r2"/>
</dbReference>
<dbReference type="InterPro" id="IPR007624">
    <property type="entry name" value="RNA_pol_sigma70_r3"/>
</dbReference>
<dbReference type="InterPro" id="IPR007630">
    <property type="entry name" value="RNA_pol_sigma70_r4"/>
</dbReference>
<dbReference type="InterPro" id="IPR013325">
    <property type="entry name" value="RNA_pol_sigma_r2"/>
</dbReference>
<dbReference type="InterPro" id="IPR013324">
    <property type="entry name" value="RNA_pol_sigma_r3/r4-like"/>
</dbReference>
<dbReference type="InterPro" id="IPR012761">
    <property type="entry name" value="RNA_pol_sigma_RpoS"/>
</dbReference>
<dbReference type="InterPro" id="IPR050239">
    <property type="entry name" value="Sigma-70_RNA_pol_init_factors"/>
</dbReference>
<dbReference type="InterPro" id="IPR036388">
    <property type="entry name" value="WH-like_DNA-bd_sf"/>
</dbReference>
<dbReference type="NCBIfam" id="NF004207">
    <property type="entry name" value="PRK05657.1"/>
    <property type="match status" value="1"/>
</dbReference>
<dbReference type="NCBIfam" id="TIGR02394">
    <property type="entry name" value="rpoS_proteo"/>
    <property type="match status" value="1"/>
</dbReference>
<dbReference type="NCBIfam" id="TIGR02937">
    <property type="entry name" value="sigma70-ECF"/>
    <property type="match status" value="1"/>
</dbReference>
<dbReference type="PANTHER" id="PTHR30603">
    <property type="entry name" value="RNA POLYMERASE SIGMA FACTOR RPO"/>
    <property type="match status" value="1"/>
</dbReference>
<dbReference type="PANTHER" id="PTHR30603:SF67">
    <property type="entry name" value="RNA POLYMERASE SIGMA FACTOR RPOS"/>
    <property type="match status" value="1"/>
</dbReference>
<dbReference type="Pfam" id="PF00140">
    <property type="entry name" value="Sigma70_r1_2"/>
    <property type="match status" value="1"/>
</dbReference>
<dbReference type="Pfam" id="PF04542">
    <property type="entry name" value="Sigma70_r2"/>
    <property type="match status" value="1"/>
</dbReference>
<dbReference type="Pfam" id="PF04539">
    <property type="entry name" value="Sigma70_r3"/>
    <property type="match status" value="1"/>
</dbReference>
<dbReference type="Pfam" id="PF04545">
    <property type="entry name" value="Sigma70_r4"/>
    <property type="match status" value="1"/>
</dbReference>
<dbReference type="PRINTS" id="PR00046">
    <property type="entry name" value="SIGMA70FCT"/>
</dbReference>
<dbReference type="SUPFAM" id="SSF88946">
    <property type="entry name" value="Sigma2 domain of RNA polymerase sigma factors"/>
    <property type="match status" value="1"/>
</dbReference>
<dbReference type="SUPFAM" id="SSF88659">
    <property type="entry name" value="Sigma3 and sigma4 domains of RNA polymerase sigma factors"/>
    <property type="match status" value="2"/>
</dbReference>
<dbReference type="PROSITE" id="PS00715">
    <property type="entry name" value="SIGMA70_1"/>
    <property type="match status" value="1"/>
</dbReference>
<dbReference type="PROSITE" id="PS00716">
    <property type="entry name" value="SIGMA70_2"/>
    <property type="match status" value="1"/>
</dbReference>
<accession>F5ZTT9</accession>
<gene>
    <name evidence="1" type="primary">rpoS</name>
    <name type="ordered locus">STMUK_2913</name>
</gene>
<keyword id="KW-0963">Cytoplasm</keyword>
<keyword id="KW-0238">DNA-binding</keyword>
<keyword id="KW-0731">Sigma factor</keyword>
<keyword id="KW-0346">Stress response</keyword>
<keyword id="KW-0804">Transcription</keyword>
<keyword id="KW-0805">Transcription regulation</keyword>